<sequence>MQQRRRPPIASRETLQALLSEGAQALGVALSDAQRGALLDYVALLAKWNAVYNLTAIRDPRQMLIQHILDSLSIVPHLGAHGAAAAALDVGSGGGLPGVVLAIALPGWRVTLNDIVHKKSAFQNQAKAELKLGNLSVVTGRVETLRPGADVPAKFDVIVSRAFADLADFVTLARHLVAPGGSIWAMKGVRPDEEIGRLPDGARVKQMIRLTVPSLDAERHLIEVELDEAI</sequence>
<accession>A2S6K9</accession>
<proteinExistence type="inferred from homology"/>
<reference key="1">
    <citation type="journal article" date="2010" name="Genome Biol. Evol.">
        <title>Continuing evolution of Burkholderia mallei through genome reduction and large-scale rearrangements.</title>
        <authorList>
            <person name="Losada L."/>
            <person name="Ronning C.M."/>
            <person name="DeShazer D."/>
            <person name="Woods D."/>
            <person name="Fedorova N."/>
            <person name="Kim H.S."/>
            <person name="Shabalina S.A."/>
            <person name="Pearson T.R."/>
            <person name="Brinkac L."/>
            <person name="Tan P."/>
            <person name="Nandi T."/>
            <person name="Crabtree J."/>
            <person name="Badger J."/>
            <person name="Beckstrom-Sternberg S."/>
            <person name="Saqib M."/>
            <person name="Schutzer S.E."/>
            <person name="Keim P."/>
            <person name="Nierman W.C."/>
        </authorList>
    </citation>
    <scope>NUCLEOTIDE SEQUENCE [LARGE SCALE GENOMIC DNA]</scope>
    <source>
        <strain>NCTC 10229</strain>
    </source>
</reference>
<feature type="chain" id="PRO_0000335319" description="Ribosomal RNA small subunit methyltransferase G">
    <location>
        <begin position="1"/>
        <end position="230"/>
    </location>
</feature>
<feature type="binding site" evidence="1">
    <location>
        <position position="91"/>
    </location>
    <ligand>
        <name>S-adenosyl-L-methionine</name>
        <dbReference type="ChEBI" id="CHEBI:59789"/>
    </ligand>
</feature>
<feature type="binding site" evidence="1">
    <location>
        <position position="96"/>
    </location>
    <ligand>
        <name>S-adenosyl-L-methionine</name>
        <dbReference type="ChEBI" id="CHEBI:59789"/>
    </ligand>
</feature>
<feature type="binding site" evidence="1">
    <location>
        <begin position="142"/>
        <end position="143"/>
    </location>
    <ligand>
        <name>S-adenosyl-L-methionine</name>
        <dbReference type="ChEBI" id="CHEBI:59789"/>
    </ligand>
</feature>
<feature type="binding site" evidence="1">
    <location>
        <position position="161"/>
    </location>
    <ligand>
        <name>S-adenosyl-L-methionine</name>
        <dbReference type="ChEBI" id="CHEBI:59789"/>
    </ligand>
</feature>
<protein>
    <recommendedName>
        <fullName evidence="1">Ribosomal RNA small subunit methyltransferase G</fullName>
        <ecNumber evidence="1">2.1.1.170</ecNumber>
    </recommendedName>
    <alternativeName>
        <fullName evidence="1">16S rRNA 7-methylguanosine methyltransferase</fullName>
        <shortName evidence="1">16S rRNA m7G methyltransferase</shortName>
    </alternativeName>
</protein>
<organism>
    <name type="scientific">Burkholderia mallei (strain NCTC 10229)</name>
    <dbReference type="NCBI Taxonomy" id="412022"/>
    <lineage>
        <taxon>Bacteria</taxon>
        <taxon>Pseudomonadati</taxon>
        <taxon>Pseudomonadota</taxon>
        <taxon>Betaproteobacteria</taxon>
        <taxon>Burkholderiales</taxon>
        <taxon>Burkholderiaceae</taxon>
        <taxon>Burkholderia</taxon>
        <taxon>pseudomallei group</taxon>
    </lineage>
</organism>
<evidence type="ECO:0000255" key="1">
    <source>
        <dbReference type="HAMAP-Rule" id="MF_00074"/>
    </source>
</evidence>
<gene>
    <name evidence="1" type="primary">rsmG</name>
    <name type="ordered locus">BMA10229_A1598</name>
</gene>
<keyword id="KW-0963">Cytoplasm</keyword>
<keyword id="KW-0489">Methyltransferase</keyword>
<keyword id="KW-0698">rRNA processing</keyword>
<keyword id="KW-0949">S-adenosyl-L-methionine</keyword>
<keyword id="KW-0808">Transferase</keyword>
<comment type="function">
    <text evidence="1">Specifically methylates the N7 position of guanine in position 527 of 16S rRNA.</text>
</comment>
<comment type="catalytic activity">
    <reaction evidence="1">
        <text>guanosine(527) in 16S rRNA + S-adenosyl-L-methionine = N(7)-methylguanosine(527) in 16S rRNA + S-adenosyl-L-homocysteine</text>
        <dbReference type="Rhea" id="RHEA:42732"/>
        <dbReference type="Rhea" id="RHEA-COMP:10209"/>
        <dbReference type="Rhea" id="RHEA-COMP:10210"/>
        <dbReference type="ChEBI" id="CHEBI:57856"/>
        <dbReference type="ChEBI" id="CHEBI:59789"/>
        <dbReference type="ChEBI" id="CHEBI:74269"/>
        <dbReference type="ChEBI" id="CHEBI:74480"/>
        <dbReference type="EC" id="2.1.1.170"/>
    </reaction>
</comment>
<comment type="subcellular location">
    <subcellularLocation>
        <location evidence="1">Cytoplasm</location>
    </subcellularLocation>
</comment>
<comment type="similarity">
    <text evidence="1">Belongs to the methyltransferase superfamily. RNA methyltransferase RsmG family.</text>
</comment>
<name>RSMG_BURM9</name>
<dbReference type="EC" id="2.1.1.170" evidence="1"/>
<dbReference type="EMBL" id="CP000546">
    <property type="protein sequence ID" value="ABN03402.2"/>
    <property type="molecule type" value="Genomic_DNA"/>
</dbReference>
<dbReference type="SMR" id="A2S6K9"/>
<dbReference type="KEGG" id="bml:BMA10229_A1598"/>
<dbReference type="HOGENOM" id="CLU_065341_2_0_4"/>
<dbReference type="Proteomes" id="UP000002283">
    <property type="component" value="Chromosome I"/>
</dbReference>
<dbReference type="GO" id="GO:0005829">
    <property type="term" value="C:cytosol"/>
    <property type="evidence" value="ECO:0007669"/>
    <property type="project" value="TreeGrafter"/>
</dbReference>
<dbReference type="GO" id="GO:0070043">
    <property type="term" value="F:rRNA (guanine-N7-)-methyltransferase activity"/>
    <property type="evidence" value="ECO:0007669"/>
    <property type="project" value="UniProtKB-UniRule"/>
</dbReference>
<dbReference type="CDD" id="cd02440">
    <property type="entry name" value="AdoMet_MTases"/>
    <property type="match status" value="1"/>
</dbReference>
<dbReference type="Gene3D" id="3.40.50.150">
    <property type="entry name" value="Vaccinia Virus protein VP39"/>
    <property type="match status" value="1"/>
</dbReference>
<dbReference type="HAMAP" id="MF_00074">
    <property type="entry name" value="16SrRNA_methyltr_G"/>
    <property type="match status" value="1"/>
</dbReference>
<dbReference type="InterPro" id="IPR003682">
    <property type="entry name" value="rRNA_ssu_MeTfrase_G"/>
</dbReference>
<dbReference type="InterPro" id="IPR029063">
    <property type="entry name" value="SAM-dependent_MTases_sf"/>
</dbReference>
<dbReference type="NCBIfam" id="TIGR00138">
    <property type="entry name" value="rsmG_gidB"/>
    <property type="match status" value="1"/>
</dbReference>
<dbReference type="PANTHER" id="PTHR31760">
    <property type="entry name" value="S-ADENOSYL-L-METHIONINE-DEPENDENT METHYLTRANSFERASES SUPERFAMILY PROTEIN"/>
    <property type="match status" value="1"/>
</dbReference>
<dbReference type="PANTHER" id="PTHR31760:SF0">
    <property type="entry name" value="S-ADENOSYL-L-METHIONINE-DEPENDENT METHYLTRANSFERASES SUPERFAMILY PROTEIN"/>
    <property type="match status" value="1"/>
</dbReference>
<dbReference type="Pfam" id="PF02527">
    <property type="entry name" value="GidB"/>
    <property type="match status" value="1"/>
</dbReference>
<dbReference type="PIRSF" id="PIRSF003078">
    <property type="entry name" value="GidB"/>
    <property type="match status" value="1"/>
</dbReference>
<dbReference type="SUPFAM" id="SSF53335">
    <property type="entry name" value="S-adenosyl-L-methionine-dependent methyltransferases"/>
    <property type="match status" value="1"/>
</dbReference>